<proteinExistence type="inferred from homology"/>
<reference key="1">
    <citation type="journal article" date="2004" name="Nucleic Acids Res.">
        <title>The genome sequence of Bacillus cereus ATCC 10987 reveals metabolic adaptations and a large plasmid related to Bacillus anthracis pXO1.</title>
        <authorList>
            <person name="Rasko D.A."/>
            <person name="Ravel J."/>
            <person name="Oekstad O.A."/>
            <person name="Helgason E."/>
            <person name="Cer R.Z."/>
            <person name="Jiang L."/>
            <person name="Shores K.A."/>
            <person name="Fouts D.E."/>
            <person name="Tourasse N.J."/>
            <person name="Angiuoli S.V."/>
            <person name="Kolonay J.F."/>
            <person name="Nelson W.C."/>
            <person name="Kolstoe A.-B."/>
            <person name="Fraser C.M."/>
            <person name="Read T.D."/>
        </authorList>
    </citation>
    <scope>NUCLEOTIDE SEQUENCE [LARGE SCALE GENOMIC DNA]</scope>
    <source>
        <strain>ATCC 10987 / NRS 248</strain>
    </source>
</reference>
<name>RL16_BACC1</name>
<sequence length="144" mass="16158">MLMPKRVKYRREHRGKMRGRAKGGTEVAFGEFGLQAQAASWITNRQIEAARRAMTRYMKRGGKVWIKIFPSKPYTAKPLEVRMGSGKGAPEGWVAVVKPGKIMFEIAGVSEEVAREALRLAAHKLPVKCKFVKREENGGESNEN</sequence>
<gene>
    <name evidence="1" type="primary">rplP</name>
    <name type="ordered locus">BCE_0117</name>
</gene>
<evidence type="ECO:0000255" key="1">
    <source>
        <dbReference type="HAMAP-Rule" id="MF_01342"/>
    </source>
</evidence>
<evidence type="ECO:0000305" key="2"/>
<organism>
    <name type="scientific">Bacillus cereus (strain ATCC 10987 / NRS 248)</name>
    <dbReference type="NCBI Taxonomy" id="222523"/>
    <lineage>
        <taxon>Bacteria</taxon>
        <taxon>Bacillati</taxon>
        <taxon>Bacillota</taxon>
        <taxon>Bacilli</taxon>
        <taxon>Bacillales</taxon>
        <taxon>Bacillaceae</taxon>
        <taxon>Bacillus</taxon>
        <taxon>Bacillus cereus group</taxon>
    </lineage>
</organism>
<protein>
    <recommendedName>
        <fullName evidence="1">Large ribosomal subunit protein uL16</fullName>
    </recommendedName>
    <alternativeName>
        <fullName evidence="2">50S ribosomal protein L16</fullName>
    </alternativeName>
</protein>
<keyword id="KW-0687">Ribonucleoprotein</keyword>
<keyword id="KW-0689">Ribosomal protein</keyword>
<keyword id="KW-0694">RNA-binding</keyword>
<keyword id="KW-0699">rRNA-binding</keyword>
<keyword id="KW-0820">tRNA-binding</keyword>
<dbReference type="EMBL" id="AE017194">
    <property type="protein sequence ID" value="AAS39053.1"/>
    <property type="molecule type" value="Genomic_DNA"/>
</dbReference>
<dbReference type="SMR" id="Q73F89"/>
<dbReference type="KEGG" id="bca:BCE_0117"/>
<dbReference type="HOGENOM" id="CLU_078858_2_1_9"/>
<dbReference type="Proteomes" id="UP000002527">
    <property type="component" value="Chromosome"/>
</dbReference>
<dbReference type="GO" id="GO:0022625">
    <property type="term" value="C:cytosolic large ribosomal subunit"/>
    <property type="evidence" value="ECO:0007669"/>
    <property type="project" value="TreeGrafter"/>
</dbReference>
<dbReference type="GO" id="GO:0019843">
    <property type="term" value="F:rRNA binding"/>
    <property type="evidence" value="ECO:0007669"/>
    <property type="project" value="UniProtKB-UniRule"/>
</dbReference>
<dbReference type="GO" id="GO:0003735">
    <property type="term" value="F:structural constituent of ribosome"/>
    <property type="evidence" value="ECO:0007669"/>
    <property type="project" value="InterPro"/>
</dbReference>
<dbReference type="GO" id="GO:0000049">
    <property type="term" value="F:tRNA binding"/>
    <property type="evidence" value="ECO:0007669"/>
    <property type="project" value="UniProtKB-KW"/>
</dbReference>
<dbReference type="GO" id="GO:0006412">
    <property type="term" value="P:translation"/>
    <property type="evidence" value="ECO:0007669"/>
    <property type="project" value="UniProtKB-UniRule"/>
</dbReference>
<dbReference type="CDD" id="cd01433">
    <property type="entry name" value="Ribosomal_L16_L10e"/>
    <property type="match status" value="1"/>
</dbReference>
<dbReference type="FunFam" id="3.90.1170.10:FF:000001">
    <property type="entry name" value="50S ribosomal protein L16"/>
    <property type="match status" value="1"/>
</dbReference>
<dbReference type="Gene3D" id="3.90.1170.10">
    <property type="entry name" value="Ribosomal protein L10e/L16"/>
    <property type="match status" value="1"/>
</dbReference>
<dbReference type="HAMAP" id="MF_01342">
    <property type="entry name" value="Ribosomal_uL16"/>
    <property type="match status" value="1"/>
</dbReference>
<dbReference type="InterPro" id="IPR047873">
    <property type="entry name" value="Ribosomal_uL16"/>
</dbReference>
<dbReference type="InterPro" id="IPR000114">
    <property type="entry name" value="Ribosomal_uL16_bact-type"/>
</dbReference>
<dbReference type="InterPro" id="IPR020798">
    <property type="entry name" value="Ribosomal_uL16_CS"/>
</dbReference>
<dbReference type="InterPro" id="IPR016180">
    <property type="entry name" value="Ribosomal_uL16_dom"/>
</dbReference>
<dbReference type="InterPro" id="IPR036920">
    <property type="entry name" value="Ribosomal_uL16_sf"/>
</dbReference>
<dbReference type="NCBIfam" id="TIGR01164">
    <property type="entry name" value="rplP_bact"/>
    <property type="match status" value="1"/>
</dbReference>
<dbReference type="PANTHER" id="PTHR12220">
    <property type="entry name" value="50S/60S RIBOSOMAL PROTEIN L16"/>
    <property type="match status" value="1"/>
</dbReference>
<dbReference type="PANTHER" id="PTHR12220:SF13">
    <property type="entry name" value="LARGE RIBOSOMAL SUBUNIT PROTEIN UL16M"/>
    <property type="match status" value="1"/>
</dbReference>
<dbReference type="Pfam" id="PF00252">
    <property type="entry name" value="Ribosomal_L16"/>
    <property type="match status" value="1"/>
</dbReference>
<dbReference type="PRINTS" id="PR00060">
    <property type="entry name" value="RIBOSOMALL16"/>
</dbReference>
<dbReference type="SUPFAM" id="SSF54686">
    <property type="entry name" value="Ribosomal protein L16p/L10e"/>
    <property type="match status" value="1"/>
</dbReference>
<dbReference type="PROSITE" id="PS00586">
    <property type="entry name" value="RIBOSOMAL_L16_1"/>
    <property type="match status" value="1"/>
</dbReference>
<dbReference type="PROSITE" id="PS00701">
    <property type="entry name" value="RIBOSOMAL_L16_2"/>
    <property type="match status" value="1"/>
</dbReference>
<feature type="chain" id="PRO_0000062036" description="Large ribosomal subunit protein uL16">
    <location>
        <begin position="1"/>
        <end position="144"/>
    </location>
</feature>
<comment type="function">
    <text evidence="1">Binds 23S rRNA and is also seen to make contacts with the A and possibly P site tRNAs.</text>
</comment>
<comment type="subunit">
    <text evidence="1">Part of the 50S ribosomal subunit.</text>
</comment>
<comment type="similarity">
    <text evidence="1">Belongs to the universal ribosomal protein uL16 family.</text>
</comment>
<accession>Q73F89</accession>